<sequence>MENLQLVLFVLGAIAIIAVLVHGFWSIRKQQPKSLKESPMSGFYKDQASVRDSQGFDADGIGEVRVRKEVPATDRQEKEDKPVQEPAFTAAPSRDVEDSRHEQAFALSDEPVQRAARQRQEPVLSMGANAKDDEVQMELGLGQDSQSSLFETVEQESVVEPTPEPEVKAEEPLGEPKDVLVLHVVANEGEELNGAELLPCLLSLNFKFGDMDIFHRHEDNAGTGKVLFSLANMVKPGVFNLDNMEQFTTEGVVLFMTLPCHGDPLMNFSIMLNSAHQLADDVGGRLLDGGREDWSESTKQLYLQRIRAQLD</sequence>
<keyword id="KW-0131">Cell cycle</keyword>
<keyword id="KW-0132">Cell division</keyword>
<keyword id="KW-0997">Cell inner membrane</keyword>
<keyword id="KW-1003">Cell membrane</keyword>
<keyword id="KW-0472">Membrane</keyword>
<keyword id="KW-1185">Reference proteome</keyword>
<keyword id="KW-0812">Transmembrane</keyword>
<keyword id="KW-1133">Transmembrane helix</keyword>
<evidence type="ECO:0000255" key="1">
    <source>
        <dbReference type="HAMAP-Rule" id="MF_00509"/>
    </source>
</evidence>
<evidence type="ECO:0000256" key="2">
    <source>
        <dbReference type="SAM" id="MobiDB-lite"/>
    </source>
</evidence>
<accession>B1KJT6</accession>
<comment type="function">
    <text evidence="1">Essential cell division protein that stabilizes the FtsZ protofilaments by cross-linking them and that serves as a cytoplasmic membrane anchor for the Z ring. Also required for the recruitment to the septal ring of downstream cell division proteins.</text>
</comment>
<comment type="subunit">
    <text evidence="1">Interacts with FtsZ via their C-terminal domains.</text>
</comment>
<comment type="subcellular location">
    <subcellularLocation>
        <location evidence="1">Cell inner membrane</location>
        <topology evidence="1">Single-pass type I membrane protein</topology>
    </subcellularLocation>
    <text evidence="1">Localizes to the Z ring in an FtsZ-dependent manner.</text>
</comment>
<comment type="similarity">
    <text evidence="1">Belongs to the ZipA family.</text>
</comment>
<organism>
    <name type="scientific">Shewanella woodyi (strain ATCC 51908 / MS32)</name>
    <dbReference type="NCBI Taxonomy" id="392500"/>
    <lineage>
        <taxon>Bacteria</taxon>
        <taxon>Pseudomonadati</taxon>
        <taxon>Pseudomonadota</taxon>
        <taxon>Gammaproteobacteria</taxon>
        <taxon>Alteromonadales</taxon>
        <taxon>Shewanellaceae</taxon>
        <taxon>Shewanella</taxon>
    </lineage>
</organism>
<protein>
    <recommendedName>
        <fullName evidence="1">Cell division protein ZipA</fullName>
    </recommendedName>
</protein>
<feature type="chain" id="PRO_1000127232" description="Cell division protein ZipA">
    <location>
        <begin position="1"/>
        <end position="311"/>
    </location>
</feature>
<feature type="topological domain" description="Periplasmic" evidence="1">
    <location>
        <begin position="1"/>
        <end position="6"/>
    </location>
</feature>
<feature type="transmembrane region" description="Helical" evidence="1">
    <location>
        <begin position="7"/>
        <end position="27"/>
    </location>
</feature>
<feature type="topological domain" description="Cytoplasmic" evidence="1">
    <location>
        <begin position="28"/>
        <end position="311"/>
    </location>
</feature>
<feature type="region of interest" description="Disordered" evidence="2">
    <location>
        <begin position="46"/>
        <end position="114"/>
    </location>
</feature>
<feature type="compositionally biased region" description="Basic and acidic residues" evidence="2">
    <location>
        <begin position="62"/>
        <end position="83"/>
    </location>
</feature>
<feature type="compositionally biased region" description="Basic and acidic residues" evidence="2">
    <location>
        <begin position="94"/>
        <end position="103"/>
    </location>
</feature>
<gene>
    <name evidence="1" type="primary">zipA</name>
    <name type="ordered locus">Swoo_2848</name>
</gene>
<proteinExistence type="inferred from homology"/>
<reference key="1">
    <citation type="submission" date="2008-02" db="EMBL/GenBank/DDBJ databases">
        <title>Complete sequence of Shewanella woodyi ATCC 51908.</title>
        <authorList>
            <consortium name="US DOE Joint Genome Institute"/>
            <person name="Copeland A."/>
            <person name="Lucas S."/>
            <person name="Lapidus A."/>
            <person name="Glavina del Rio T."/>
            <person name="Dalin E."/>
            <person name="Tice H."/>
            <person name="Bruce D."/>
            <person name="Goodwin L."/>
            <person name="Pitluck S."/>
            <person name="Sims D."/>
            <person name="Brettin T."/>
            <person name="Detter J.C."/>
            <person name="Han C."/>
            <person name="Kuske C.R."/>
            <person name="Schmutz J."/>
            <person name="Larimer F."/>
            <person name="Land M."/>
            <person name="Hauser L."/>
            <person name="Kyrpides N."/>
            <person name="Lykidis A."/>
            <person name="Zhao J.-S."/>
            <person name="Richardson P."/>
        </authorList>
    </citation>
    <scope>NUCLEOTIDE SEQUENCE [LARGE SCALE GENOMIC DNA]</scope>
    <source>
        <strain>ATCC 51908 / MS32</strain>
    </source>
</reference>
<name>ZIPA_SHEWM</name>
<dbReference type="EMBL" id="CP000961">
    <property type="protein sequence ID" value="ACA87123.1"/>
    <property type="molecule type" value="Genomic_DNA"/>
</dbReference>
<dbReference type="RefSeq" id="WP_012325459.1">
    <property type="nucleotide sequence ID" value="NC_010506.1"/>
</dbReference>
<dbReference type="SMR" id="B1KJT6"/>
<dbReference type="STRING" id="392500.Swoo_2848"/>
<dbReference type="KEGG" id="swd:Swoo_2848"/>
<dbReference type="eggNOG" id="COG3115">
    <property type="taxonomic scope" value="Bacteria"/>
</dbReference>
<dbReference type="HOGENOM" id="CLU_030174_1_0_6"/>
<dbReference type="Proteomes" id="UP000002168">
    <property type="component" value="Chromosome"/>
</dbReference>
<dbReference type="GO" id="GO:0032153">
    <property type="term" value="C:cell division site"/>
    <property type="evidence" value="ECO:0007669"/>
    <property type="project" value="UniProtKB-UniRule"/>
</dbReference>
<dbReference type="GO" id="GO:0005886">
    <property type="term" value="C:plasma membrane"/>
    <property type="evidence" value="ECO:0007669"/>
    <property type="project" value="UniProtKB-SubCell"/>
</dbReference>
<dbReference type="GO" id="GO:0000917">
    <property type="term" value="P:division septum assembly"/>
    <property type="evidence" value="ECO:0007669"/>
    <property type="project" value="TreeGrafter"/>
</dbReference>
<dbReference type="GO" id="GO:0043093">
    <property type="term" value="P:FtsZ-dependent cytokinesis"/>
    <property type="evidence" value="ECO:0007669"/>
    <property type="project" value="UniProtKB-UniRule"/>
</dbReference>
<dbReference type="Gene3D" id="3.30.1400.10">
    <property type="entry name" value="ZipA, C-terminal FtsZ-binding domain"/>
    <property type="match status" value="1"/>
</dbReference>
<dbReference type="HAMAP" id="MF_00509">
    <property type="entry name" value="ZipA"/>
    <property type="match status" value="1"/>
</dbReference>
<dbReference type="InterPro" id="IPR011919">
    <property type="entry name" value="Cell_div_ZipA"/>
</dbReference>
<dbReference type="InterPro" id="IPR007449">
    <property type="entry name" value="ZipA_FtsZ-bd_C"/>
</dbReference>
<dbReference type="InterPro" id="IPR036765">
    <property type="entry name" value="ZipA_FtsZ-bd_C_sf"/>
</dbReference>
<dbReference type="NCBIfam" id="TIGR02205">
    <property type="entry name" value="septum_zipA"/>
    <property type="match status" value="1"/>
</dbReference>
<dbReference type="PANTHER" id="PTHR38685">
    <property type="entry name" value="CELL DIVISION PROTEIN ZIPA"/>
    <property type="match status" value="1"/>
</dbReference>
<dbReference type="PANTHER" id="PTHR38685:SF1">
    <property type="entry name" value="CELL DIVISION PROTEIN ZIPA"/>
    <property type="match status" value="1"/>
</dbReference>
<dbReference type="Pfam" id="PF04354">
    <property type="entry name" value="ZipA_C"/>
    <property type="match status" value="1"/>
</dbReference>
<dbReference type="SMART" id="SM00771">
    <property type="entry name" value="ZipA_C"/>
    <property type="match status" value="1"/>
</dbReference>
<dbReference type="SUPFAM" id="SSF64383">
    <property type="entry name" value="Cell-division protein ZipA, C-terminal domain"/>
    <property type="match status" value="1"/>
</dbReference>